<keyword id="KW-0378">Hydrolase</keyword>
<gene>
    <name evidence="1" type="primary">rppH</name>
    <name evidence="1" type="synonym">nudH</name>
    <name type="ordered locus">BMEA_A1886</name>
</gene>
<feature type="chain" id="PRO_1000191839" description="RNA pyrophosphohydrolase">
    <location>
        <begin position="1"/>
        <end position="178"/>
    </location>
</feature>
<feature type="domain" description="Nudix hydrolase" evidence="1">
    <location>
        <begin position="18"/>
        <end position="171"/>
    </location>
</feature>
<feature type="short sequence motif" description="Nudix box">
    <location>
        <begin position="59"/>
        <end position="80"/>
    </location>
</feature>
<dbReference type="EC" id="3.6.1.-" evidence="1"/>
<dbReference type="EMBL" id="CP001488">
    <property type="protein sequence ID" value="ACO01557.1"/>
    <property type="molecule type" value="Genomic_DNA"/>
</dbReference>
<dbReference type="RefSeq" id="WP_004684311.1">
    <property type="nucleotide sequence ID" value="NC_012441.1"/>
</dbReference>
<dbReference type="SMR" id="C0RF85"/>
<dbReference type="KEGG" id="bmi:BMEA_A1886"/>
<dbReference type="HOGENOM" id="CLU_087195_3_0_5"/>
<dbReference type="Proteomes" id="UP000001748">
    <property type="component" value="Chromosome I"/>
</dbReference>
<dbReference type="GO" id="GO:0034432">
    <property type="term" value="F:bis(5'-adenosyl)-pentaphosphatase activity"/>
    <property type="evidence" value="ECO:0007669"/>
    <property type="project" value="TreeGrafter"/>
</dbReference>
<dbReference type="GO" id="GO:0008893">
    <property type="term" value="F:guanosine-3',5'-bis(diphosphate) 3'-diphosphatase activity"/>
    <property type="evidence" value="ECO:0007669"/>
    <property type="project" value="TreeGrafter"/>
</dbReference>
<dbReference type="GO" id="GO:0006753">
    <property type="term" value="P:nucleoside phosphate metabolic process"/>
    <property type="evidence" value="ECO:0007669"/>
    <property type="project" value="TreeGrafter"/>
</dbReference>
<dbReference type="GO" id="GO:0019693">
    <property type="term" value="P:ribose phosphate metabolic process"/>
    <property type="evidence" value="ECO:0007669"/>
    <property type="project" value="TreeGrafter"/>
</dbReference>
<dbReference type="CDD" id="cd03671">
    <property type="entry name" value="NUDIX_Ap4A_hydrolase_plant_like"/>
    <property type="match status" value="1"/>
</dbReference>
<dbReference type="Gene3D" id="3.90.79.10">
    <property type="entry name" value="Nucleoside Triphosphate Pyrophosphohydrolase"/>
    <property type="match status" value="1"/>
</dbReference>
<dbReference type="HAMAP" id="MF_00298">
    <property type="entry name" value="Nudix_RppH"/>
    <property type="match status" value="1"/>
</dbReference>
<dbReference type="InterPro" id="IPR020476">
    <property type="entry name" value="Nudix_hydrolase"/>
</dbReference>
<dbReference type="InterPro" id="IPR015797">
    <property type="entry name" value="NUDIX_hydrolase-like_dom_sf"/>
</dbReference>
<dbReference type="InterPro" id="IPR020084">
    <property type="entry name" value="NUDIX_hydrolase_CS"/>
</dbReference>
<dbReference type="InterPro" id="IPR000086">
    <property type="entry name" value="NUDIX_hydrolase_dom"/>
</dbReference>
<dbReference type="InterPro" id="IPR022927">
    <property type="entry name" value="RppH"/>
</dbReference>
<dbReference type="NCBIfam" id="NF001938">
    <property type="entry name" value="PRK00714.1-5"/>
    <property type="match status" value="1"/>
</dbReference>
<dbReference type="PANTHER" id="PTHR11839:SF22">
    <property type="entry name" value="NUDIX HYDROLASE 26, CHLOROPLASTIC"/>
    <property type="match status" value="1"/>
</dbReference>
<dbReference type="PANTHER" id="PTHR11839">
    <property type="entry name" value="UDP/ADP-SUGAR PYROPHOSPHATASE"/>
    <property type="match status" value="1"/>
</dbReference>
<dbReference type="Pfam" id="PF00293">
    <property type="entry name" value="NUDIX"/>
    <property type="match status" value="1"/>
</dbReference>
<dbReference type="PRINTS" id="PR00502">
    <property type="entry name" value="NUDIXFAMILY"/>
</dbReference>
<dbReference type="SUPFAM" id="SSF55811">
    <property type="entry name" value="Nudix"/>
    <property type="match status" value="1"/>
</dbReference>
<dbReference type="PROSITE" id="PS51462">
    <property type="entry name" value="NUDIX"/>
    <property type="match status" value="1"/>
</dbReference>
<dbReference type="PROSITE" id="PS00893">
    <property type="entry name" value="NUDIX_BOX"/>
    <property type="match status" value="1"/>
</dbReference>
<accession>C0RF85</accession>
<protein>
    <recommendedName>
        <fullName evidence="1">RNA pyrophosphohydrolase</fullName>
        <ecNumber evidence="1">3.6.1.-</ecNumber>
    </recommendedName>
    <alternativeName>
        <fullName evidence="1">(Di)nucleoside polyphosphate hydrolase</fullName>
    </alternativeName>
</protein>
<proteinExistence type="inferred from homology"/>
<sequence length="178" mass="19855">MSEHKGPTGAMVDPESLPYRPCVGLMVLNKAGLVWAGRRIVIPGDEMDGATQLWQMPQGGIDKGEDPAQAALRELYEETGMTSVSLLEEASDWINYDLPPHLVGLALKGKYRGQTQKWFAYRFEGDESEIAINPPPGGHTAEFDCWEWKPMADLPNLIVPFKRKVYEQVVATFRHLAA</sequence>
<reference key="1">
    <citation type="submission" date="2009-03" db="EMBL/GenBank/DDBJ databases">
        <title>Brucella melitensis ATCC 23457 whole genome shotgun sequencing project.</title>
        <authorList>
            <person name="Setubal J.C."/>
            <person name="Boyle S."/>
            <person name="Crasta O.R."/>
            <person name="Gillespie J.J."/>
            <person name="Kenyon R.W."/>
            <person name="Lu J."/>
            <person name="Mane S."/>
            <person name="Nagrani S."/>
            <person name="Shallom J.M."/>
            <person name="Shallom S."/>
            <person name="Shukla M."/>
            <person name="Snyder E.E."/>
            <person name="Sobral B.W."/>
            <person name="Wattam A.R."/>
            <person name="Will R."/>
            <person name="Williams K."/>
            <person name="Yoo H."/>
            <person name="Munk C."/>
            <person name="Tapia R."/>
            <person name="Han C."/>
            <person name="Detter J.C."/>
            <person name="Bruce D."/>
            <person name="Brettin T.S."/>
        </authorList>
    </citation>
    <scope>NUCLEOTIDE SEQUENCE [LARGE SCALE GENOMIC DNA]</scope>
    <source>
        <strain>ATCC 23457</strain>
    </source>
</reference>
<evidence type="ECO:0000255" key="1">
    <source>
        <dbReference type="HAMAP-Rule" id="MF_00298"/>
    </source>
</evidence>
<name>RPPH_BRUMB</name>
<comment type="function">
    <text evidence="1">Accelerates the degradation of transcripts by removing pyrophosphate from the 5'-end of triphosphorylated RNA, leading to a more labile monophosphorylated state that can stimulate subsequent ribonuclease cleavage.</text>
</comment>
<comment type="cofactor">
    <cofactor evidence="1">
        <name>a divalent metal cation</name>
        <dbReference type="ChEBI" id="CHEBI:60240"/>
    </cofactor>
</comment>
<comment type="similarity">
    <text evidence="1">Belongs to the Nudix hydrolase family. RppH subfamily.</text>
</comment>
<organism>
    <name type="scientific">Brucella melitensis biotype 2 (strain ATCC 23457)</name>
    <dbReference type="NCBI Taxonomy" id="546272"/>
    <lineage>
        <taxon>Bacteria</taxon>
        <taxon>Pseudomonadati</taxon>
        <taxon>Pseudomonadota</taxon>
        <taxon>Alphaproteobacteria</taxon>
        <taxon>Hyphomicrobiales</taxon>
        <taxon>Brucellaceae</taxon>
        <taxon>Brucella/Ochrobactrum group</taxon>
        <taxon>Brucella</taxon>
    </lineage>
</organism>